<gene>
    <name type="primary">asun</name>
    <name type="synonym">Mat89Bb</name>
    <name type="ORF">GM15141</name>
</gene>
<feature type="chain" id="PRO_0000385346" description="Protein asunder">
    <location>
        <begin position="1"/>
        <end position="689"/>
    </location>
</feature>
<feature type="region of interest" description="Disordered" evidence="3">
    <location>
        <begin position="591"/>
        <end position="619"/>
    </location>
</feature>
<feature type="region of interest" description="Disordered" evidence="3">
    <location>
        <begin position="665"/>
        <end position="689"/>
    </location>
</feature>
<feature type="coiled-coil region" evidence="2">
    <location>
        <begin position="521"/>
        <end position="550"/>
    </location>
</feature>
<feature type="short sequence motif" description="Nuclear localization signal (NLS)" evidence="1">
    <location>
        <begin position="613"/>
        <end position="619"/>
    </location>
</feature>
<feature type="compositionally biased region" description="Low complexity" evidence="3">
    <location>
        <begin position="599"/>
        <end position="614"/>
    </location>
</feature>
<name>INT13_DROSE</name>
<protein>
    <recommendedName>
        <fullName>Protein asunder</fullName>
    </recommendedName>
    <alternativeName>
        <fullName evidence="1">Cell cycle regulator Mat89Bb</fullName>
    </alternativeName>
    <alternativeName>
        <fullName evidence="1">Maternal transcript 89Bb</fullName>
    </alternativeName>
    <alternativeName>
        <fullName>Set apart in position or space protein</fullName>
    </alternativeName>
</protein>
<organism>
    <name type="scientific">Drosophila sechellia</name>
    <name type="common">Fruit fly</name>
    <dbReference type="NCBI Taxonomy" id="7238"/>
    <lineage>
        <taxon>Eukaryota</taxon>
        <taxon>Metazoa</taxon>
        <taxon>Ecdysozoa</taxon>
        <taxon>Arthropoda</taxon>
        <taxon>Hexapoda</taxon>
        <taxon>Insecta</taxon>
        <taxon>Pterygota</taxon>
        <taxon>Neoptera</taxon>
        <taxon>Endopterygota</taxon>
        <taxon>Diptera</taxon>
        <taxon>Brachycera</taxon>
        <taxon>Muscomorpha</taxon>
        <taxon>Ephydroidea</taxon>
        <taxon>Drosophilidae</taxon>
        <taxon>Drosophila</taxon>
        <taxon>Sophophora</taxon>
    </lineage>
</organism>
<accession>B4IBY5</accession>
<sequence length="689" mass="75621">MFERNQKTIFVLDHTRYFSIASEEYISMDFLKGKPSGDGGATGAAGNATGSGGSQFSKSLWTCACESSIEYCRVVWDLFPGKKHVRFIVSDTAAHIVNTWSPSTQNMSHVMNAMVMVGVPSRNLPTSSDYSVIHGLRAAIEALAEPTDEQLAAMADLGTDELSRIPNKGRVICITSARDNTSMKSLEDIFNTVLVQQNTLAAPPAKKGLIIDHCHLVILNIVPLGVESLVTNRSLLKISPLLDVEIHTVSAPDISYKLTHLILNHYDLASTTVTNIPMKEEQNANSSANYDVEILHSRRAHSITCGPDFSLPTSIKQGATYETVTLKWCTPRGCGSADLQPCLGQFLVTPVDVTSRPSSCLINFLLNGRSVLLEMPRKTGSKATSHMLSARGGEIFVHSLCITRSCMDEAPSITDGPGGRVSDYRTAELGQLIKMSRMVPLKVKDPSAPPLTRRLPRYFPLTTSSSILFHLQRHISWLSHFLHLLVKEDMDKQDEVRCQQHIHELYKSASRGDVLPFTHTNGARLKLSKAKDQYRLLYRELEQLIQLNATTMHHKNLLESLQSLRAAYGDAPLKSEPGASLLRSFTESPLSPERLEPISSVGASGSSNSNSLLKASKRRMSSCGQRSLLDIISSAERSQSNKRLDFSGRLCTPLGQVAKLYPDFGTKDKDAVTTGASITPNVKEESVRS</sequence>
<proteinExistence type="inferred from homology"/>
<evidence type="ECO:0000250" key="1">
    <source>
        <dbReference type="UniProtKB" id="Q9VEX5"/>
    </source>
</evidence>
<evidence type="ECO:0000255" key="2"/>
<evidence type="ECO:0000256" key="3">
    <source>
        <dbReference type="SAM" id="MobiDB-lite"/>
    </source>
</evidence>
<evidence type="ECO:0000305" key="4"/>
<evidence type="ECO:0000312" key="5">
    <source>
        <dbReference type="EMBL" id="EDW44893.1"/>
    </source>
</evidence>
<reference evidence="5" key="1">
    <citation type="journal article" date="2007" name="Nature">
        <title>Evolution of genes and genomes on the Drosophila phylogeny.</title>
        <authorList>
            <consortium name="Drosophila 12 genomes consortium"/>
        </authorList>
    </citation>
    <scope>NUCLEOTIDE SEQUENCE [LARGE SCALE GENOMIC DNA]</scope>
    <source>
        <strain evidence="5">Rob3c / Tucson 14021-0248.25</strain>
    </source>
</reference>
<comment type="function">
    <text evidence="1">Component of the integrator complex, a multiprotein complex that terminates RNA polymerase II (Pol II) transcription in the promoter-proximal region of genes. The integrator complex provides a quality checkpoint during transcription elongation by driving premature transcription termination of transcripts that are unfavorably configured for transcriptional elongation: the complex terminates transcription by (1) catalyzing dephosphorylation of the C-terminal domain (CTD) of Pol II subunit Polr2A/Rbp1 and Spt5, and (2) degrading the exiting nascent RNA transcript via endonuclease activity. The integrator complex is also involved in the 3'-end processing of the U7 snRNA, and also the spliceosomal snRNAs U1, U2, U4 and U5.</text>
</comment>
<comment type="subunit">
    <text evidence="1">Belongs to the multiprotein complex Integrator, at least composed of IntS1, IntS2, IntS3, IntS4, omd/IntS5, IntS6, defl/IntS7, IntS8, IntS9, IntS10, IntS11, IntS12, asun/IntS13, IntS14 and IntS15. The core complex associates with protein phosphatase 2A subunits mts/PP2A and Pp2A-29B, to form the Integrator-PP2A (INTAC) complex.</text>
</comment>
<comment type="subcellular location">
    <subcellularLocation>
        <location evidence="1">Nucleus</location>
    </subcellularLocation>
    <subcellularLocation>
        <location evidence="1">Cytoplasm</location>
    </subcellularLocation>
    <subcellularLocation>
        <location evidence="1">Cytoplasm</location>
        <location evidence="1">Perinuclear region</location>
    </subcellularLocation>
    <text evidence="1">Colocalizes with dynein-dynactin on the nuclear surface at the meiotic G2/prophase transition in primary spermatocytes. Nuclear location is required for recruitment of dynein motors to nuclear envelope at G2/M.</text>
</comment>
<comment type="PTM">
    <text evidence="1">Phosphorylated.</text>
</comment>
<comment type="similarity">
    <text evidence="4">Belongs to the Integrator subunit 13 family.</text>
</comment>
<keyword id="KW-0131">Cell cycle</keyword>
<keyword id="KW-0132">Cell division</keyword>
<keyword id="KW-0175">Coiled coil</keyword>
<keyword id="KW-0963">Cytoplasm</keyword>
<keyword id="KW-0217">Developmental protein</keyword>
<keyword id="KW-0221">Differentiation</keyword>
<keyword id="KW-0469">Meiosis</keyword>
<keyword id="KW-0498">Mitosis</keyword>
<keyword id="KW-0539">Nucleus</keyword>
<keyword id="KW-0597">Phosphoprotein</keyword>
<keyword id="KW-1185">Reference proteome</keyword>
<keyword id="KW-0744">Spermatogenesis</keyword>
<dbReference type="EMBL" id="CH480827">
    <property type="protein sequence ID" value="EDW44893.1"/>
    <property type="molecule type" value="Genomic_DNA"/>
</dbReference>
<dbReference type="SMR" id="B4IBY5"/>
<dbReference type="STRING" id="7238.B4IBY5"/>
<dbReference type="EnsemblMetazoa" id="FBtr0198126">
    <property type="protein sequence ID" value="FBpp0196618"/>
    <property type="gene ID" value="FBgn0170061"/>
</dbReference>
<dbReference type="EnsemblMetazoa" id="XM_002041209.2">
    <property type="protein sequence ID" value="XP_002041245.1"/>
    <property type="gene ID" value="LOC6616915"/>
</dbReference>
<dbReference type="GeneID" id="6616915"/>
<dbReference type="KEGG" id="dse:6616915"/>
<dbReference type="CTD" id="41971"/>
<dbReference type="HOGENOM" id="CLU_012654_1_0_1"/>
<dbReference type="OMA" id="NCTAMHR"/>
<dbReference type="OrthoDB" id="38950at7215"/>
<dbReference type="PhylomeDB" id="B4IBY5"/>
<dbReference type="Proteomes" id="UP000001292">
    <property type="component" value="Unassembled WGS sequence"/>
</dbReference>
<dbReference type="GO" id="GO:0005737">
    <property type="term" value="C:cytoplasm"/>
    <property type="evidence" value="ECO:0000250"/>
    <property type="project" value="UniProtKB"/>
</dbReference>
<dbReference type="GO" id="GO:0160232">
    <property type="term" value="C:INTAC complex"/>
    <property type="evidence" value="ECO:0007669"/>
    <property type="project" value="EnsemblMetazoa"/>
</dbReference>
<dbReference type="GO" id="GO:0032039">
    <property type="term" value="C:integrator complex"/>
    <property type="evidence" value="ECO:0007669"/>
    <property type="project" value="EnsemblMetazoa"/>
</dbReference>
<dbReference type="GO" id="GO:0005634">
    <property type="term" value="C:nucleus"/>
    <property type="evidence" value="ECO:0000250"/>
    <property type="project" value="UniProtKB"/>
</dbReference>
<dbReference type="GO" id="GO:0048471">
    <property type="term" value="C:perinuclear region of cytoplasm"/>
    <property type="evidence" value="ECO:0007669"/>
    <property type="project" value="UniProtKB-SubCell"/>
</dbReference>
<dbReference type="GO" id="GO:0051301">
    <property type="term" value="P:cell division"/>
    <property type="evidence" value="ECO:0007669"/>
    <property type="project" value="UniProtKB-KW"/>
</dbReference>
<dbReference type="GO" id="GO:0051642">
    <property type="term" value="P:centrosome localization"/>
    <property type="evidence" value="ECO:0007669"/>
    <property type="project" value="EnsemblMetazoa"/>
</dbReference>
<dbReference type="GO" id="GO:0046843">
    <property type="term" value="P:dorsal appendage formation"/>
    <property type="evidence" value="ECO:0007669"/>
    <property type="project" value="EnsemblMetazoa"/>
</dbReference>
<dbReference type="GO" id="GO:0030317">
    <property type="term" value="P:flagellated sperm motility"/>
    <property type="evidence" value="ECO:0000250"/>
    <property type="project" value="UniProtKB"/>
</dbReference>
<dbReference type="GO" id="GO:0051321">
    <property type="term" value="P:meiotic cell cycle"/>
    <property type="evidence" value="ECO:0007669"/>
    <property type="project" value="UniProtKB-KW"/>
</dbReference>
<dbReference type="GO" id="GO:0051663">
    <property type="term" value="P:oocyte nucleus localization involved in oocyte dorsal/ventral axis specification"/>
    <property type="evidence" value="ECO:0007669"/>
    <property type="project" value="EnsemblMetazoa"/>
</dbReference>
<dbReference type="GO" id="GO:0060814">
    <property type="term" value="P:posterior mRNA localization involved in anterior/posterior axis specification"/>
    <property type="evidence" value="ECO:0007669"/>
    <property type="project" value="EnsemblMetazoa"/>
</dbReference>
<dbReference type="GO" id="GO:0080154">
    <property type="term" value="P:regulation of fertilization"/>
    <property type="evidence" value="ECO:0000250"/>
    <property type="project" value="UniProtKB"/>
</dbReference>
<dbReference type="GO" id="GO:0007346">
    <property type="term" value="P:regulation of mitotic cell cycle"/>
    <property type="evidence" value="ECO:0000250"/>
    <property type="project" value="UniProtKB"/>
</dbReference>
<dbReference type="GO" id="GO:0160240">
    <property type="term" value="P:RNA polymerase II transcription initiation surveillance"/>
    <property type="evidence" value="ECO:0007669"/>
    <property type="project" value="EnsemblMetazoa"/>
</dbReference>
<dbReference type="GO" id="GO:0034472">
    <property type="term" value="P:snRNA 3'-end processing"/>
    <property type="evidence" value="ECO:0007669"/>
    <property type="project" value="EnsemblMetazoa"/>
</dbReference>
<dbReference type="GO" id="GO:0007283">
    <property type="term" value="P:spermatogenesis"/>
    <property type="evidence" value="ECO:0007669"/>
    <property type="project" value="UniProtKB-KW"/>
</dbReference>
<dbReference type="InterPro" id="IPR019355">
    <property type="entry name" value="Cell_cycle_regulator_Mat89Bb"/>
</dbReference>
<dbReference type="PANTHER" id="PTHR12955:SF1">
    <property type="entry name" value="INTEGRATOR COMPLEX SUBUNIT 13"/>
    <property type="match status" value="1"/>
</dbReference>
<dbReference type="PANTHER" id="PTHR12955">
    <property type="entry name" value="SARCOMA ANTIGEN NY-SAR-95-RELATED"/>
    <property type="match status" value="1"/>
</dbReference>
<dbReference type="Pfam" id="PF10221">
    <property type="entry name" value="Mat89Bb"/>
    <property type="match status" value="1"/>
</dbReference>